<comment type="function">
    <text evidence="1">Catalyzes the transfer of acetyl from acetyl-CoA to desacetylmycothiol (Cys-GlcN-Ins) to form mycothiol.</text>
</comment>
<comment type="catalytic activity">
    <reaction evidence="1">
        <text>1D-myo-inositol 2-(L-cysteinylamino)-2-deoxy-alpha-D-glucopyranoside + acetyl-CoA = mycothiol + CoA + H(+)</text>
        <dbReference type="Rhea" id="RHEA:26172"/>
        <dbReference type="ChEBI" id="CHEBI:15378"/>
        <dbReference type="ChEBI" id="CHEBI:16768"/>
        <dbReference type="ChEBI" id="CHEBI:57287"/>
        <dbReference type="ChEBI" id="CHEBI:57288"/>
        <dbReference type="ChEBI" id="CHEBI:58887"/>
        <dbReference type="EC" id="2.3.1.189"/>
    </reaction>
</comment>
<comment type="subunit">
    <text evidence="1">Monomer.</text>
</comment>
<comment type="similarity">
    <text evidence="1">Belongs to the acetyltransferase family. MshD subfamily.</text>
</comment>
<organism>
    <name type="scientific">Mycobacterium avium (strain 104)</name>
    <dbReference type="NCBI Taxonomy" id="243243"/>
    <lineage>
        <taxon>Bacteria</taxon>
        <taxon>Bacillati</taxon>
        <taxon>Actinomycetota</taxon>
        <taxon>Actinomycetes</taxon>
        <taxon>Mycobacteriales</taxon>
        <taxon>Mycobacteriaceae</taxon>
        <taxon>Mycobacterium</taxon>
        <taxon>Mycobacterium avium complex (MAC)</taxon>
    </lineage>
</organism>
<feature type="chain" id="PRO_0000400267" description="Mycothiol acetyltransferase">
    <location>
        <begin position="1"/>
        <end position="316"/>
    </location>
</feature>
<feature type="domain" description="N-acetyltransferase 1" evidence="1">
    <location>
        <begin position="16"/>
        <end position="153"/>
    </location>
</feature>
<feature type="domain" description="N-acetyltransferase 2" evidence="1">
    <location>
        <begin position="156"/>
        <end position="316"/>
    </location>
</feature>
<feature type="binding site" evidence="1">
    <location>
        <position position="36"/>
    </location>
    <ligand>
        <name>1D-myo-inositol 2-(L-cysteinylamino)-2-deoxy-alpha-D-glucopyranoside</name>
        <dbReference type="ChEBI" id="CHEBI:58887"/>
    </ligand>
</feature>
<feature type="binding site" evidence="1">
    <location>
        <begin position="83"/>
        <end position="85"/>
    </location>
    <ligand>
        <name>acetyl-CoA</name>
        <dbReference type="ChEBI" id="CHEBI:57288"/>
        <label>1</label>
    </ligand>
</feature>
<feature type="binding site" evidence="1">
    <location>
        <begin position="91"/>
        <end position="96"/>
    </location>
    <ligand>
        <name>acetyl-CoA</name>
        <dbReference type="ChEBI" id="CHEBI:57288"/>
        <label>1</label>
    </ligand>
</feature>
<feature type="binding site" evidence="1">
    <location>
        <position position="183"/>
    </location>
    <ligand>
        <name>1D-myo-inositol 2-(L-cysteinylamino)-2-deoxy-alpha-D-glucopyranoside</name>
        <dbReference type="ChEBI" id="CHEBI:58887"/>
    </ligand>
</feature>
<feature type="binding site" evidence="1">
    <location>
        <position position="228"/>
    </location>
    <ligand>
        <name>1D-myo-inositol 2-(L-cysteinylamino)-2-deoxy-alpha-D-glucopyranoside</name>
        <dbReference type="ChEBI" id="CHEBI:58887"/>
    </ligand>
</feature>
<feature type="binding site" evidence="1">
    <location>
        <position position="238"/>
    </location>
    <ligand>
        <name>1D-myo-inositol 2-(L-cysteinylamino)-2-deoxy-alpha-D-glucopyranoside</name>
        <dbReference type="ChEBI" id="CHEBI:58887"/>
    </ligand>
</feature>
<feature type="binding site" evidence="1">
    <location>
        <begin position="242"/>
        <end position="244"/>
    </location>
    <ligand>
        <name>acetyl-CoA</name>
        <dbReference type="ChEBI" id="CHEBI:57288"/>
        <label>2</label>
    </ligand>
</feature>
<feature type="binding site" evidence="1">
    <location>
        <begin position="249"/>
        <end position="255"/>
    </location>
    <ligand>
        <name>acetyl-CoA</name>
        <dbReference type="ChEBI" id="CHEBI:57288"/>
        <label>2</label>
    </ligand>
</feature>
<feature type="binding site" evidence="1">
    <location>
        <position position="283"/>
    </location>
    <ligand>
        <name>1D-myo-inositol 2-(L-cysteinylamino)-2-deoxy-alpha-D-glucopyranoside</name>
        <dbReference type="ChEBI" id="CHEBI:58887"/>
    </ligand>
</feature>
<feature type="binding site" evidence="1">
    <location>
        <begin position="288"/>
        <end position="293"/>
    </location>
    <ligand>
        <name>acetyl-CoA</name>
        <dbReference type="ChEBI" id="CHEBI:57288"/>
        <label>2</label>
    </ligand>
</feature>
<sequence>MTAADWRRTLNPQEQREVRELVGAATEFDAVAPVGEQVLRELGHDRTEHLLIRGSVSGGAADAVVGYLNLTPPRDAQPQMAELVVHPRARRRGIGSALARAALAKTGAANRFWAHGTLEPARATAAALGLSPVRELMQMRRSLRDLPDSVPAVPGVRIRTYAGLADDAELLRVNNAAFAYHPEQGGWTDVELAERRAEPWFDPAGLFLAFGDDDSDRPGRLLGFHWTKVHLDQPGLGEVYVVGVDPCAQGRGLGQALTAVGIEWLARRLGAGDSAADPTVMLYVEADNVAAVRTYQRLGFTTYSVDTAYAVPPAAN</sequence>
<name>MSHD_MYCA1</name>
<reference key="1">
    <citation type="submission" date="2006-10" db="EMBL/GenBank/DDBJ databases">
        <authorList>
            <person name="Fleischmann R.D."/>
            <person name="Dodson R.J."/>
            <person name="Haft D.H."/>
            <person name="Merkel J.S."/>
            <person name="Nelson W.C."/>
            <person name="Fraser C.M."/>
        </authorList>
    </citation>
    <scope>NUCLEOTIDE SEQUENCE [LARGE SCALE GENOMIC DNA]</scope>
    <source>
        <strain>104</strain>
    </source>
</reference>
<protein>
    <recommendedName>
        <fullName evidence="1">Mycothiol acetyltransferase</fullName>
        <shortName evidence="1">MSH acetyltransferase</shortName>
        <ecNumber evidence="1">2.3.1.189</ecNumber>
    </recommendedName>
    <alternativeName>
        <fullName evidence="1">Mycothiol synthase</fullName>
    </alternativeName>
</protein>
<dbReference type="EC" id="2.3.1.189" evidence="1"/>
<dbReference type="EMBL" id="CP000479">
    <property type="protein sequence ID" value="ABK67142.1"/>
    <property type="molecule type" value="Genomic_DNA"/>
</dbReference>
<dbReference type="RefSeq" id="WP_011723739.1">
    <property type="nucleotide sequence ID" value="NC_008595.1"/>
</dbReference>
<dbReference type="SMR" id="A0QAU8"/>
<dbReference type="KEGG" id="mav:MAV_0761"/>
<dbReference type="HOGENOM" id="CLU_068014_0_0_11"/>
<dbReference type="Proteomes" id="UP000001574">
    <property type="component" value="Chromosome"/>
</dbReference>
<dbReference type="GO" id="GO:0035447">
    <property type="term" value="F:mycothiol synthase activity"/>
    <property type="evidence" value="ECO:0007669"/>
    <property type="project" value="UniProtKB-UniRule"/>
</dbReference>
<dbReference type="GO" id="GO:0008999">
    <property type="term" value="F:protein-N-terminal-alanine acetyltransferase activity"/>
    <property type="evidence" value="ECO:0007669"/>
    <property type="project" value="TreeGrafter"/>
</dbReference>
<dbReference type="GO" id="GO:0010125">
    <property type="term" value="P:mycothiol biosynthetic process"/>
    <property type="evidence" value="ECO:0007669"/>
    <property type="project" value="UniProtKB-UniRule"/>
</dbReference>
<dbReference type="CDD" id="cd04301">
    <property type="entry name" value="NAT_SF"/>
    <property type="match status" value="2"/>
</dbReference>
<dbReference type="Gene3D" id="3.40.630.30">
    <property type="match status" value="1"/>
</dbReference>
<dbReference type="HAMAP" id="MF_01698">
    <property type="entry name" value="MshD"/>
    <property type="match status" value="1"/>
</dbReference>
<dbReference type="InterPro" id="IPR016181">
    <property type="entry name" value="Acyl_CoA_acyltransferase"/>
</dbReference>
<dbReference type="InterPro" id="IPR000182">
    <property type="entry name" value="GNAT_dom"/>
</dbReference>
<dbReference type="InterPro" id="IPR050276">
    <property type="entry name" value="MshD_Acetyltransferase"/>
</dbReference>
<dbReference type="InterPro" id="IPR017813">
    <property type="entry name" value="Mycothiol_AcTrfase"/>
</dbReference>
<dbReference type="NCBIfam" id="TIGR03448">
    <property type="entry name" value="mycothiol_MshD"/>
    <property type="match status" value="1"/>
</dbReference>
<dbReference type="PANTHER" id="PTHR43617">
    <property type="entry name" value="L-AMINO ACID N-ACETYLTRANSFERASE"/>
    <property type="match status" value="1"/>
</dbReference>
<dbReference type="PANTHER" id="PTHR43617:SF31">
    <property type="entry name" value="MYCOTHIOL ACETYLTRANSFERASE"/>
    <property type="match status" value="1"/>
</dbReference>
<dbReference type="Pfam" id="PF00583">
    <property type="entry name" value="Acetyltransf_1"/>
    <property type="match status" value="2"/>
</dbReference>
<dbReference type="PIRSF" id="PIRSF021524">
    <property type="entry name" value="MSH_acetyltransferase"/>
    <property type="match status" value="1"/>
</dbReference>
<dbReference type="SUPFAM" id="SSF55729">
    <property type="entry name" value="Acyl-CoA N-acyltransferases (Nat)"/>
    <property type="match status" value="1"/>
</dbReference>
<dbReference type="PROSITE" id="PS51186">
    <property type="entry name" value="GNAT"/>
    <property type="match status" value="2"/>
</dbReference>
<proteinExistence type="inferred from homology"/>
<accession>A0QAU8</accession>
<evidence type="ECO:0000255" key="1">
    <source>
        <dbReference type="HAMAP-Rule" id="MF_01698"/>
    </source>
</evidence>
<keyword id="KW-0012">Acyltransferase</keyword>
<keyword id="KW-0677">Repeat</keyword>
<keyword id="KW-0808">Transferase</keyword>
<gene>
    <name evidence="1" type="primary">mshD</name>
    <name type="ordered locus">MAV_0761</name>
</gene>